<dbReference type="EMBL" id="BC135837">
    <property type="protein sequence ID" value="AAI35838.1"/>
    <property type="molecule type" value="mRNA"/>
</dbReference>
<dbReference type="RefSeq" id="NP_001096354.1">
    <property type="nucleotide sequence ID" value="NM_001102884.1"/>
</dbReference>
<dbReference type="SMR" id="A4II40"/>
<dbReference type="FunCoup" id="A4II40">
    <property type="interactions" value="752"/>
</dbReference>
<dbReference type="PaxDb" id="8364-ENSXETP00000062666"/>
<dbReference type="DNASU" id="100124944"/>
<dbReference type="GeneID" id="100124944"/>
<dbReference type="KEGG" id="xtr:100124944"/>
<dbReference type="AGR" id="Xenbase:XB-GENE-956073"/>
<dbReference type="CTD" id="339778"/>
<dbReference type="Xenbase" id="XB-GENE-956073">
    <property type="gene designation" value="cimip2c"/>
</dbReference>
<dbReference type="eggNOG" id="ENOG502S0NQ">
    <property type="taxonomic scope" value="Eukaryota"/>
</dbReference>
<dbReference type="InParanoid" id="A4II40"/>
<dbReference type="OMA" id="RQKRDCY"/>
<dbReference type="OrthoDB" id="8181742at2759"/>
<dbReference type="Proteomes" id="UP000008143">
    <property type="component" value="Chromosome 5"/>
</dbReference>
<dbReference type="GO" id="GO:0005879">
    <property type="term" value="C:axonemal microtubule"/>
    <property type="evidence" value="ECO:0000250"/>
    <property type="project" value="UniProtKB"/>
</dbReference>
<dbReference type="InterPro" id="IPR052329">
    <property type="entry name" value="CIMIP2C"/>
</dbReference>
<dbReference type="InterPro" id="IPR018902">
    <property type="entry name" value="CMI2A-C-like_dom"/>
</dbReference>
<dbReference type="PANTHER" id="PTHR34924:SF1">
    <property type="entry name" value="PROTEIN FAM166C"/>
    <property type="match status" value="1"/>
</dbReference>
<dbReference type="PANTHER" id="PTHR34924">
    <property type="entry name" value="UPF0573 PROTEIN C2ORF70"/>
    <property type="match status" value="1"/>
</dbReference>
<dbReference type="Pfam" id="PF10629">
    <property type="entry name" value="CMI2B-like"/>
    <property type="match status" value="1"/>
</dbReference>
<protein>
    <recommendedName>
        <fullName>Ciliary microtubule inner protein 2C</fullName>
    </recommendedName>
</protein>
<comment type="function">
    <text evidence="1">Microtubule inner protein (MIP) part of the dynein-decorated doublet microtubules (DMTs) in cilia axoneme, which is required for motile cilia beating.</text>
</comment>
<comment type="subcellular location">
    <subcellularLocation>
        <location evidence="1">Cytoplasm</location>
        <location evidence="1">Cytoskeleton</location>
        <location evidence="1">Cilium axoneme</location>
    </subcellularLocation>
</comment>
<comment type="similarity">
    <text evidence="2">Belongs to the CIMIP2 family.</text>
</comment>
<gene>
    <name type="primary">cimip2c</name>
    <name type="synonym">fam166c</name>
</gene>
<sequence length="155" mass="17361">MASRSAGTLITHNNATYIPPALMPGYRGHIPTASFTYGDTYGSTSARCFQDFRSTVLNSSRSPYCQGGQFPTGNASDPALVIGHRARGWDRFLHSPSWSRYNGDFKRAQELTQFHKAAEQHRDHYRDKSGSVHQVPHFIVPVKNPETFPLPQQVL</sequence>
<reference key="1">
    <citation type="submission" date="2007-03" db="EMBL/GenBank/DDBJ databases">
        <authorList>
            <consortium name="NIH - Xenopus Gene Collection (XGC) project"/>
        </authorList>
    </citation>
    <scope>NUCLEOTIDE SEQUENCE [LARGE SCALE MRNA]</scope>
    <source>
        <tissue>Tadpole</tissue>
    </source>
</reference>
<evidence type="ECO:0000250" key="1">
    <source>
        <dbReference type="UniProtKB" id="A6NJV1"/>
    </source>
</evidence>
<evidence type="ECO:0000305" key="2"/>
<name>CMI2C_XENTR</name>
<keyword id="KW-0966">Cell projection</keyword>
<keyword id="KW-0963">Cytoplasm</keyword>
<keyword id="KW-0206">Cytoskeleton</keyword>
<keyword id="KW-1185">Reference proteome</keyword>
<organism>
    <name type="scientific">Xenopus tropicalis</name>
    <name type="common">Western clawed frog</name>
    <name type="synonym">Silurana tropicalis</name>
    <dbReference type="NCBI Taxonomy" id="8364"/>
    <lineage>
        <taxon>Eukaryota</taxon>
        <taxon>Metazoa</taxon>
        <taxon>Chordata</taxon>
        <taxon>Craniata</taxon>
        <taxon>Vertebrata</taxon>
        <taxon>Euteleostomi</taxon>
        <taxon>Amphibia</taxon>
        <taxon>Batrachia</taxon>
        <taxon>Anura</taxon>
        <taxon>Pipoidea</taxon>
        <taxon>Pipidae</taxon>
        <taxon>Xenopodinae</taxon>
        <taxon>Xenopus</taxon>
        <taxon>Silurana</taxon>
    </lineage>
</organism>
<proteinExistence type="evidence at transcript level"/>
<feature type="chain" id="PRO_0000332281" description="Ciliary microtubule inner protein 2C">
    <location>
        <begin position="1"/>
        <end position="155"/>
    </location>
</feature>
<accession>A4II40</accession>